<dbReference type="EMBL" id="DQ663560">
    <property type="protein sequence ID" value="ABG81313.1"/>
    <property type="molecule type" value="mRNA"/>
</dbReference>
<dbReference type="RefSeq" id="NP_001105987.1">
    <property type="nucleotide sequence ID" value="NM_001112517.1"/>
</dbReference>
<dbReference type="SMR" id="A4KA56"/>
<dbReference type="FunCoup" id="A4KA56">
    <property type="interactions" value="773"/>
</dbReference>
<dbReference type="STRING" id="4577.A4KA56"/>
<dbReference type="Allergome" id="682">
    <property type="allergen name" value="Zea m 12"/>
</dbReference>
<dbReference type="InParanoid" id="A4KA56"/>
<dbReference type="Proteomes" id="UP000007305">
    <property type="component" value="Unplaced"/>
</dbReference>
<dbReference type="ExpressionAtlas" id="A4KA56">
    <property type="expression patterns" value="baseline and differential"/>
</dbReference>
<dbReference type="GO" id="GO:0005938">
    <property type="term" value="C:cell cortex"/>
    <property type="evidence" value="ECO:0000318"/>
    <property type="project" value="GO_Central"/>
</dbReference>
<dbReference type="GO" id="GO:0005856">
    <property type="term" value="C:cytoskeleton"/>
    <property type="evidence" value="ECO:0007669"/>
    <property type="project" value="UniProtKB-SubCell"/>
</dbReference>
<dbReference type="GO" id="GO:0003785">
    <property type="term" value="F:actin monomer binding"/>
    <property type="evidence" value="ECO:0000318"/>
    <property type="project" value="GO_Central"/>
</dbReference>
<dbReference type="GO" id="GO:0070064">
    <property type="term" value="F:proline-rich region binding"/>
    <property type="evidence" value="ECO:0007669"/>
    <property type="project" value="UniProtKB-ARBA"/>
</dbReference>
<dbReference type="GO" id="GO:0007097">
    <property type="term" value="P:nuclear migration"/>
    <property type="evidence" value="ECO:0007669"/>
    <property type="project" value="UniProtKB-ARBA"/>
</dbReference>
<dbReference type="GO" id="GO:0032956">
    <property type="term" value="P:regulation of actin cytoskeleton organization"/>
    <property type="evidence" value="ECO:0007669"/>
    <property type="project" value="UniProtKB-ARBA"/>
</dbReference>
<dbReference type="CDD" id="cd00148">
    <property type="entry name" value="PROF"/>
    <property type="match status" value="1"/>
</dbReference>
<dbReference type="FunFam" id="3.30.450.30:FF:000001">
    <property type="entry name" value="Profilin"/>
    <property type="match status" value="1"/>
</dbReference>
<dbReference type="Gene3D" id="3.30.450.30">
    <property type="entry name" value="Dynein light chain 2a, cytoplasmic"/>
    <property type="match status" value="1"/>
</dbReference>
<dbReference type="InterPro" id="IPR048278">
    <property type="entry name" value="PFN"/>
</dbReference>
<dbReference type="InterPro" id="IPR005455">
    <property type="entry name" value="PFN_euk"/>
</dbReference>
<dbReference type="InterPro" id="IPR036140">
    <property type="entry name" value="PFN_sf"/>
</dbReference>
<dbReference type="InterPro" id="IPR027310">
    <property type="entry name" value="Profilin_CS"/>
</dbReference>
<dbReference type="PANTHER" id="PTHR11604">
    <property type="entry name" value="PROFILIN"/>
    <property type="match status" value="1"/>
</dbReference>
<dbReference type="PANTHER" id="PTHR11604:SF51">
    <property type="entry name" value="PROFILIN-A"/>
    <property type="match status" value="1"/>
</dbReference>
<dbReference type="Pfam" id="PF00235">
    <property type="entry name" value="Profilin"/>
    <property type="match status" value="1"/>
</dbReference>
<dbReference type="PRINTS" id="PR00392">
    <property type="entry name" value="PROFILIN"/>
</dbReference>
<dbReference type="PRINTS" id="PR01640">
    <property type="entry name" value="PROFILINPLNT"/>
</dbReference>
<dbReference type="SMART" id="SM00392">
    <property type="entry name" value="PROF"/>
    <property type="match status" value="1"/>
</dbReference>
<dbReference type="SUPFAM" id="SSF55770">
    <property type="entry name" value="Profilin (actin-binding protein)"/>
    <property type="match status" value="1"/>
</dbReference>
<dbReference type="PROSITE" id="PS00414">
    <property type="entry name" value="PROFILIN"/>
    <property type="match status" value="1"/>
</dbReference>
<keyword id="KW-0009">Actin-binding</keyword>
<keyword id="KW-0020">Allergen</keyword>
<keyword id="KW-0963">Cytoplasm</keyword>
<keyword id="KW-0206">Cytoskeleton</keyword>
<keyword id="KW-1015">Disulfide bond</keyword>
<keyword id="KW-0597">Phosphoprotein</keyword>
<keyword id="KW-1185">Reference proteome</keyword>
<comment type="function">
    <text evidence="1">Binds to actin and affects the structure of the cytoskeleton. At high concentrations, profilin prevents the polymerization of actin, whereas it enhances it at low concentrations (By similarity).</text>
</comment>
<comment type="subunit">
    <text evidence="1">Occurs in many kinds of cells as a complex with monomeric actin in a 1:1 ratio.</text>
</comment>
<comment type="subcellular location">
    <subcellularLocation>
        <location evidence="1">Cytoplasm</location>
        <location evidence="1">Cytoskeleton</location>
    </subcellularLocation>
</comment>
<comment type="PTM">
    <text evidence="1">Phosphorylated by MAP kinases.</text>
</comment>
<comment type="polymorphism">
    <text>Several isoforms of the allergen exist due to polymorphism.</text>
</comment>
<comment type="allergen">
    <text>Causes an allergic reaction in human.</text>
</comment>
<comment type="miscellaneous">
    <text evidence="3">The variability of the residues taking part of IgE-binding epitopes might be responsible of the difference in cross-reactivity among olive pollen cultivars, and between distantly related pollen species, leading to a variable range of allergy reactions among atopic patients.</text>
</comment>
<comment type="similarity">
    <text evidence="2">Belongs to the profilin family.</text>
</comment>
<sequence>MSWQAYVDEHLMCEIEGHHLTSAAIVGHDGAVWAQSTAFPQFKTEEMTNIMKDFDEPGFLAPTGLFLGPTKYMVIQGEPGAVIRGKKGSGGITVKKTGQAMVVGIYDEPMTPGQCNMVVERLGDYLLEQGL</sequence>
<evidence type="ECO:0000250" key="1"/>
<evidence type="ECO:0000305" key="2"/>
<evidence type="ECO:0000305" key="3">
    <source>
    </source>
</evidence>
<name>PROF7_MAIZE</name>
<accession>A4KA56</accession>
<feature type="initiator methionine" description="Removed" evidence="1">
    <location>
        <position position="1"/>
    </location>
</feature>
<feature type="chain" id="PRO_0000425066" description="Profilin-7">
    <location>
        <begin position="2"/>
        <end position="131"/>
    </location>
</feature>
<feature type="short sequence motif" description="Involved in PIP2 interaction">
    <location>
        <begin position="81"/>
        <end position="97"/>
    </location>
</feature>
<feature type="modified residue" description="Phosphothreonine" evidence="1">
    <location>
        <position position="111"/>
    </location>
</feature>
<feature type="disulfide bond" evidence="3">
    <location>
        <begin position="13"/>
        <end position="115"/>
    </location>
</feature>
<protein>
    <recommendedName>
        <fullName>Profilin-7</fullName>
    </recommendedName>
    <alternativeName>
        <fullName>Pollen allergen Zea m 12</fullName>
    </alternativeName>
    <alternativeName>
        <fullName>Pollen profilin variant 2</fullName>
    </alternativeName>
    <allergenName>Zea m 12</allergenName>
</protein>
<organism>
    <name type="scientific">Zea mays</name>
    <name type="common">Maize</name>
    <dbReference type="NCBI Taxonomy" id="4577"/>
    <lineage>
        <taxon>Eukaryota</taxon>
        <taxon>Viridiplantae</taxon>
        <taxon>Streptophyta</taxon>
        <taxon>Embryophyta</taxon>
        <taxon>Tracheophyta</taxon>
        <taxon>Spermatophyta</taxon>
        <taxon>Magnoliopsida</taxon>
        <taxon>Liliopsida</taxon>
        <taxon>Poales</taxon>
        <taxon>Poaceae</taxon>
        <taxon>PACMAD clade</taxon>
        <taxon>Panicoideae</taxon>
        <taxon>Andropogonodae</taxon>
        <taxon>Andropogoneae</taxon>
        <taxon>Tripsacinae</taxon>
        <taxon>Zea</taxon>
    </lineage>
</organism>
<proteinExistence type="evidence at protein level"/>
<reference key="1">
    <citation type="journal article" date="2012" name="PLoS ONE">
        <title>Characterization of profilin polymorphism in pollen with a focus on multifunctionality.</title>
        <authorList>
            <person name="Jimenez-Lopez J.C."/>
            <person name="Morales S."/>
            <person name="Castro A.J."/>
            <person name="Volkmann D."/>
            <person name="Rodriguez-Garcia M.I."/>
            <person name="Alche Jde D."/>
        </authorList>
    </citation>
    <scope>NUCLEOTIDE SEQUENCE [MRNA]</scope>
    <scope>POLYMORPHISM</scope>
    <source>
        <strain>cv. Birko</strain>
    </source>
</reference>
<reference key="2">
    <citation type="journal article" date="2013" name="PLoS ONE">
        <title>Analysis of the effects of polymorphism on pollen profilin structural functionality and the generation of conformational, T- and B-cell epitopes.</title>
        <authorList>
            <person name="Jimenez-Lopez J.C."/>
            <person name="Rodriguez-Garcia M.I."/>
            <person name="Alche J.D."/>
        </authorList>
    </citation>
    <scope>3D-STRUCTURE MODELING</scope>
    <scope>DISULFIDE BOND</scope>
</reference>